<protein>
    <recommendedName>
        <fullName evidence="1">Hydroxylamine reductase</fullName>
        <ecNumber evidence="1">1.7.99.1</ecNumber>
    </recommendedName>
    <alternativeName>
        <fullName evidence="1">Hybrid-cluster protein</fullName>
        <shortName evidence="1">HCP</shortName>
    </alternativeName>
    <alternativeName>
        <fullName evidence="1">Prismane protein</fullName>
    </alternativeName>
</protein>
<feature type="chain" id="PRO_1000009166" description="Hydroxylamine reductase">
    <location>
        <begin position="1"/>
        <end position="554"/>
    </location>
</feature>
<feature type="binding site" evidence="1">
    <location>
        <position position="3"/>
    </location>
    <ligand>
        <name>[2Fe-2S] cluster</name>
        <dbReference type="ChEBI" id="CHEBI:190135"/>
    </ligand>
</feature>
<feature type="binding site" evidence="1">
    <location>
        <position position="6"/>
    </location>
    <ligand>
        <name>[2Fe-2S] cluster</name>
        <dbReference type="ChEBI" id="CHEBI:190135"/>
    </ligand>
</feature>
<feature type="binding site" evidence="1">
    <location>
        <position position="18"/>
    </location>
    <ligand>
        <name>[2Fe-2S] cluster</name>
        <dbReference type="ChEBI" id="CHEBI:190135"/>
    </ligand>
</feature>
<feature type="binding site" evidence="1">
    <location>
        <position position="25"/>
    </location>
    <ligand>
        <name>[2Fe-2S] cluster</name>
        <dbReference type="ChEBI" id="CHEBI:190135"/>
    </ligand>
</feature>
<feature type="binding site" evidence="1">
    <location>
        <position position="252"/>
    </location>
    <ligand>
        <name>hybrid [4Fe-2O-2S] cluster</name>
        <dbReference type="ChEBI" id="CHEBI:60519"/>
    </ligand>
</feature>
<feature type="binding site" evidence="1">
    <location>
        <position position="276"/>
    </location>
    <ligand>
        <name>hybrid [4Fe-2O-2S] cluster</name>
        <dbReference type="ChEBI" id="CHEBI:60519"/>
    </ligand>
</feature>
<feature type="binding site" evidence="1">
    <location>
        <position position="320"/>
    </location>
    <ligand>
        <name>hybrid [4Fe-2O-2S] cluster</name>
        <dbReference type="ChEBI" id="CHEBI:60519"/>
    </ligand>
</feature>
<feature type="binding site" description="via persulfide group" evidence="1">
    <location>
        <position position="408"/>
    </location>
    <ligand>
        <name>hybrid [4Fe-2O-2S] cluster</name>
        <dbReference type="ChEBI" id="CHEBI:60519"/>
    </ligand>
</feature>
<feature type="binding site" evidence="1">
    <location>
        <position position="436"/>
    </location>
    <ligand>
        <name>hybrid [4Fe-2O-2S] cluster</name>
        <dbReference type="ChEBI" id="CHEBI:60519"/>
    </ligand>
</feature>
<feature type="binding site" evidence="1">
    <location>
        <position position="461"/>
    </location>
    <ligand>
        <name>hybrid [4Fe-2O-2S] cluster</name>
        <dbReference type="ChEBI" id="CHEBI:60519"/>
    </ligand>
</feature>
<feature type="binding site" evidence="1">
    <location>
        <position position="495"/>
    </location>
    <ligand>
        <name>hybrid [4Fe-2O-2S] cluster</name>
        <dbReference type="ChEBI" id="CHEBI:60519"/>
    </ligand>
</feature>
<feature type="binding site" evidence="1">
    <location>
        <position position="497"/>
    </location>
    <ligand>
        <name>hybrid [4Fe-2O-2S] cluster</name>
        <dbReference type="ChEBI" id="CHEBI:60519"/>
    </ligand>
</feature>
<feature type="modified residue" description="Cysteine persulfide" evidence="1">
    <location>
        <position position="408"/>
    </location>
</feature>
<gene>
    <name evidence="1" type="primary">hcp</name>
    <name type="ordered locus">Shew_1069</name>
</gene>
<evidence type="ECO:0000255" key="1">
    <source>
        <dbReference type="HAMAP-Rule" id="MF_00069"/>
    </source>
</evidence>
<organism>
    <name type="scientific">Shewanella loihica (strain ATCC BAA-1088 / PV-4)</name>
    <dbReference type="NCBI Taxonomy" id="323850"/>
    <lineage>
        <taxon>Bacteria</taxon>
        <taxon>Pseudomonadati</taxon>
        <taxon>Pseudomonadota</taxon>
        <taxon>Gammaproteobacteria</taxon>
        <taxon>Alteromonadales</taxon>
        <taxon>Shewanellaceae</taxon>
        <taxon>Shewanella</taxon>
    </lineage>
</organism>
<reference key="1">
    <citation type="submission" date="2007-03" db="EMBL/GenBank/DDBJ databases">
        <title>Complete sequence of Shewanella loihica PV-4.</title>
        <authorList>
            <consortium name="US DOE Joint Genome Institute"/>
            <person name="Copeland A."/>
            <person name="Lucas S."/>
            <person name="Lapidus A."/>
            <person name="Barry K."/>
            <person name="Detter J.C."/>
            <person name="Glavina del Rio T."/>
            <person name="Hammon N."/>
            <person name="Israni S."/>
            <person name="Dalin E."/>
            <person name="Tice H."/>
            <person name="Pitluck S."/>
            <person name="Chain P."/>
            <person name="Malfatti S."/>
            <person name="Shin M."/>
            <person name="Vergez L."/>
            <person name="Schmutz J."/>
            <person name="Larimer F."/>
            <person name="Land M."/>
            <person name="Hauser L."/>
            <person name="Kyrpides N."/>
            <person name="Mikhailova N."/>
            <person name="Romine M.F."/>
            <person name="Serres G."/>
            <person name="Fredrickson J."/>
            <person name="Tiedje J."/>
            <person name="Richardson P."/>
        </authorList>
    </citation>
    <scope>NUCLEOTIDE SEQUENCE [LARGE SCALE GENOMIC DNA]</scope>
    <source>
        <strain>ATCC BAA-1088 / PV-4</strain>
    </source>
</reference>
<accession>A3QBU2</accession>
<dbReference type="EC" id="1.7.99.1" evidence="1"/>
<dbReference type="EMBL" id="CP000606">
    <property type="protein sequence ID" value="ABO22940.1"/>
    <property type="molecule type" value="Genomic_DNA"/>
</dbReference>
<dbReference type="RefSeq" id="WP_011864873.1">
    <property type="nucleotide sequence ID" value="NC_009092.1"/>
</dbReference>
<dbReference type="SMR" id="A3QBU2"/>
<dbReference type="STRING" id="323850.Shew_1069"/>
<dbReference type="KEGG" id="slo:Shew_1069"/>
<dbReference type="eggNOG" id="COG1151">
    <property type="taxonomic scope" value="Bacteria"/>
</dbReference>
<dbReference type="HOGENOM" id="CLU_038344_2_0_6"/>
<dbReference type="OrthoDB" id="9761526at2"/>
<dbReference type="Proteomes" id="UP000001558">
    <property type="component" value="Chromosome"/>
</dbReference>
<dbReference type="GO" id="GO:0005737">
    <property type="term" value="C:cytoplasm"/>
    <property type="evidence" value="ECO:0007669"/>
    <property type="project" value="UniProtKB-SubCell"/>
</dbReference>
<dbReference type="GO" id="GO:0051537">
    <property type="term" value="F:2 iron, 2 sulfur cluster binding"/>
    <property type="evidence" value="ECO:0007669"/>
    <property type="project" value="UniProtKB-KW"/>
</dbReference>
<dbReference type="GO" id="GO:0050418">
    <property type="term" value="F:hydroxylamine reductase activity"/>
    <property type="evidence" value="ECO:0007669"/>
    <property type="project" value="UniProtKB-UniRule"/>
</dbReference>
<dbReference type="GO" id="GO:0046872">
    <property type="term" value="F:metal ion binding"/>
    <property type="evidence" value="ECO:0007669"/>
    <property type="project" value="UniProtKB-KW"/>
</dbReference>
<dbReference type="GO" id="GO:0004601">
    <property type="term" value="F:peroxidase activity"/>
    <property type="evidence" value="ECO:0007669"/>
    <property type="project" value="TreeGrafter"/>
</dbReference>
<dbReference type="GO" id="GO:0042542">
    <property type="term" value="P:response to hydrogen peroxide"/>
    <property type="evidence" value="ECO:0007669"/>
    <property type="project" value="TreeGrafter"/>
</dbReference>
<dbReference type="CDD" id="cd01914">
    <property type="entry name" value="HCP"/>
    <property type="match status" value="1"/>
</dbReference>
<dbReference type="FunFam" id="1.20.1270.20:FF:000001">
    <property type="entry name" value="Hydroxylamine reductase"/>
    <property type="match status" value="1"/>
</dbReference>
<dbReference type="FunFam" id="1.20.1270.20:FF:000002">
    <property type="entry name" value="Hydroxylamine reductase"/>
    <property type="match status" value="1"/>
</dbReference>
<dbReference type="FunFam" id="3.40.50.2030:FF:000001">
    <property type="entry name" value="Hydroxylamine reductase"/>
    <property type="match status" value="1"/>
</dbReference>
<dbReference type="FunFam" id="3.40.50.2030:FF:000002">
    <property type="entry name" value="Hydroxylamine reductase"/>
    <property type="match status" value="1"/>
</dbReference>
<dbReference type="Gene3D" id="1.20.1270.20">
    <property type="match status" value="2"/>
</dbReference>
<dbReference type="Gene3D" id="3.40.50.2030">
    <property type="match status" value="2"/>
</dbReference>
<dbReference type="HAMAP" id="MF_00069">
    <property type="entry name" value="Hydroxylam_reduct"/>
    <property type="match status" value="1"/>
</dbReference>
<dbReference type="InterPro" id="IPR004137">
    <property type="entry name" value="HCP/CODH"/>
</dbReference>
<dbReference type="InterPro" id="IPR010048">
    <property type="entry name" value="Hydroxylam_reduct"/>
</dbReference>
<dbReference type="InterPro" id="IPR016099">
    <property type="entry name" value="Prismane-like_a/b-sand"/>
</dbReference>
<dbReference type="InterPro" id="IPR011254">
    <property type="entry name" value="Prismane-like_sf"/>
</dbReference>
<dbReference type="InterPro" id="IPR016100">
    <property type="entry name" value="Prismane_a-bundle"/>
</dbReference>
<dbReference type="NCBIfam" id="TIGR01703">
    <property type="entry name" value="hybrid_clust"/>
    <property type="match status" value="1"/>
</dbReference>
<dbReference type="NCBIfam" id="NF003658">
    <property type="entry name" value="PRK05290.1"/>
    <property type="match status" value="1"/>
</dbReference>
<dbReference type="PANTHER" id="PTHR30109">
    <property type="entry name" value="HYDROXYLAMINE REDUCTASE"/>
    <property type="match status" value="1"/>
</dbReference>
<dbReference type="PANTHER" id="PTHR30109:SF0">
    <property type="entry name" value="HYDROXYLAMINE REDUCTASE"/>
    <property type="match status" value="1"/>
</dbReference>
<dbReference type="Pfam" id="PF03063">
    <property type="entry name" value="Prismane"/>
    <property type="match status" value="1"/>
</dbReference>
<dbReference type="PIRSF" id="PIRSF000076">
    <property type="entry name" value="HCP"/>
    <property type="match status" value="1"/>
</dbReference>
<dbReference type="SUPFAM" id="SSF56821">
    <property type="entry name" value="Prismane protein-like"/>
    <property type="match status" value="1"/>
</dbReference>
<sequence>MFCIQCEQTIRTPAGNGCSYSQGMCGKLAATSDLQDLLIYILQGVSAYAEKARAFGIIVPAIDTFVPKAFFATLTNVNFDDERIMAYTQQAYGYRAQLQAAYESACKAQGQAIETLIPAASLVLASVKEEMLALAAQALPNRGKEEVNEDIMGLRLLCLYGLKGAAAYMEHARVLDQTDSEVAAKFHEIMAFLGSDSVDADKLFATAMEIGQLNYRVMAMLDEGETQAFGHPEPTQVNTVAVKGKAILVSGHDMKDLELILQQTEGKGINVFTHGEMLPALAYPELKKYPHLVGNYGSAWQNQQKEFANFPGAVVMTSNCIIDPNVGDYADRIFTRSIVGWPGVTHIVGDDFSAVIDKALSLEGFAYDEIPHHITIGFARNALMAAAPAVVENVKNGSIKHFFLVGGCDGDKAERSYFTDIAKAAPKDSIIMTLGCGKYKFNKLAFGDINGIPRLLDIGQCNDAYSAIQLAIALSEVFECEINELPLSLVLSWFEQKAIVILLTLLSLGVKNIRTGPSAPAFLTPNLLKVLEDKFGLRSTTTVEQDLNAILNVA</sequence>
<name>HCP_SHELP</name>
<proteinExistence type="inferred from homology"/>
<keyword id="KW-0001">2Fe-2S</keyword>
<keyword id="KW-0963">Cytoplasm</keyword>
<keyword id="KW-0408">Iron</keyword>
<keyword id="KW-0411">Iron-sulfur</keyword>
<keyword id="KW-0479">Metal-binding</keyword>
<keyword id="KW-0560">Oxidoreductase</keyword>
<keyword id="KW-1185">Reference proteome</keyword>
<comment type="function">
    <text evidence="1">Catalyzes the reduction of hydroxylamine to form NH(3) and H(2)O.</text>
</comment>
<comment type="catalytic activity">
    <reaction evidence="1">
        <text>A + NH4(+) + H2O = hydroxylamine + AH2 + H(+)</text>
        <dbReference type="Rhea" id="RHEA:22052"/>
        <dbReference type="ChEBI" id="CHEBI:13193"/>
        <dbReference type="ChEBI" id="CHEBI:15377"/>
        <dbReference type="ChEBI" id="CHEBI:15378"/>
        <dbReference type="ChEBI" id="CHEBI:15429"/>
        <dbReference type="ChEBI" id="CHEBI:17499"/>
        <dbReference type="ChEBI" id="CHEBI:28938"/>
        <dbReference type="EC" id="1.7.99.1"/>
    </reaction>
</comment>
<comment type="cofactor">
    <cofactor evidence="1">
        <name>[2Fe-2S] cluster</name>
        <dbReference type="ChEBI" id="CHEBI:190135"/>
    </cofactor>
    <text evidence="1">Binds 1 [2Fe-2S] cluster.</text>
</comment>
<comment type="cofactor">
    <cofactor evidence="1">
        <name>hybrid [4Fe-2O-2S] cluster</name>
        <dbReference type="ChEBI" id="CHEBI:60519"/>
    </cofactor>
    <text evidence="1">Binds 1 hybrid [4Fe-2O-2S] cluster.</text>
</comment>
<comment type="subcellular location">
    <subcellularLocation>
        <location evidence="1">Cytoplasm</location>
    </subcellularLocation>
</comment>
<comment type="similarity">
    <text evidence="1">Belongs to the HCP family.</text>
</comment>